<evidence type="ECO:0000255" key="1"/>
<evidence type="ECO:0000256" key="2">
    <source>
        <dbReference type="SAM" id="MobiDB-lite"/>
    </source>
</evidence>
<evidence type="ECO:0000269" key="3">
    <source>
    </source>
</evidence>
<evidence type="ECO:0000305" key="4"/>
<name>CALS6_ARATH</name>
<comment type="function">
    <text evidence="3">Probably involved in callose synthesis, but not required for callose formation after wounding or pathogen attack. During plant growth and development, callose is found as a transitory component of the cell plate in dividing cells, is a major component of pollen mother cell walls and pollen tubes, and is found as a structural component of plasmodesmatal canals.</text>
</comment>
<comment type="catalytic activity">
    <reaction>
        <text>[(1-&gt;3)-beta-D-glucosyl](n) + UDP-alpha-D-glucose = [(1-&gt;3)-beta-D-glucosyl](n+1) + UDP + H(+)</text>
        <dbReference type="Rhea" id="RHEA:21476"/>
        <dbReference type="Rhea" id="RHEA-COMP:11146"/>
        <dbReference type="Rhea" id="RHEA-COMP:14303"/>
        <dbReference type="ChEBI" id="CHEBI:15378"/>
        <dbReference type="ChEBI" id="CHEBI:37671"/>
        <dbReference type="ChEBI" id="CHEBI:58223"/>
        <dbReference type="ChEBI" id="CHEBI:58885"/>
        <dbReference type="EC" id="2.4.1.34"/>
    </reaction>
</comment>
<comment type="subcellular location">
    <subcellularLocation>
        <location evidence="4">Cell membrane</location>
        <topology evidence="4">Multi-pass membrane protein</topology>
    </subcellularLocation>
</comment>
<comment type="similarity">
    <text evidence="4">Belongs to the glycosyltransferase 48 family.</text>
</comment>
<comment type="sequence caution" evidence="4">
    <conflict type="erroneous gene model prediction">
        <sequence resource="EMBL-CDS" id="CAB86938"/>
    </conflict>
</comment>
<gene>
    <name type="primary">CALS6</name>
    <name type="synonym">GSL11</name>
    <name type="ordered locus">At3g59100</name>
    <name type="ORF">F17J16.150</name>
</gene>
<protein>
    <recommendedName>
        <fullName>Putative callose synthase 6</fullName>
        <ecNumber>2.4.1.34</ecNumber>
    </recommendedName>
    <alternativeName>
        <fullName>1,3-beta-glucan synthase</fullName>
    </alternativeName>
    <alternativeName>
        <fullName>Protein GLUCAN SYNTHASE-LIKE 11</fullName>
    </alternativeName>
</protein>
<keyword id="KW-1003">Cell membrane</keyword>
<keyword id="KW-0133">Cell shape</keyword>
<keyword id="KW-0961">Cell wall biogenesis/degradation</keyword>
<keyword id="KW-0328">Glycosyltransferase</keyword>
<keyword id="KW-0472">Membrane</keyword>
<keyword id="KW-1185">Reference proteome</keyword>
<keyword id="KW-0808">Transferase</keyword>
<keyword id="KW-0812">Transmembrane</keyword>
<keyword id="KW-1133">Transmembrane helix</keyword>
<reference key="1">
    <citation type="journal article" date="2000" name="Nature">
        <title>Sequence and analysis of chromosome 3 of the plant Arabidopsis thaliana.</title>
        <authorList>
            <person name="Salanoubat M."/>
            <person name="Lemcke K."/>
            <person name="Rieger M."/>
            <person name="Ansorge W."/>
            <person name="Unseld M."/>
            <person name="Fartmann B."/>
            <person name="Valle G."/>
            <person name="Bloecker H."/>
            <person name="Perez-Alonso M."/>
            <person name="Obermaier B."/>
            <person name="Delseny M."/>
            <person name="Boutry M."/>
            <person name="Grivell L.A."/>
            <person name="Mache R."/>
            <person name="Puigdomenech P."/>
            <person name="De Simone V."/>
            <person name="Choisne N."/>
            <person name="Artiguenave F."/>
            <person name="Robert C."/>
            <person name="Brottier P."/>
            <person name="Wincker P."/>
            <person name="Cattolico L."/>
            <person name="Weissenbach J."/>
            <person name="Saurin W."/>
            <person name="Quetier F."/>
            <person name="Schaefer M."/>
            <person name="Mueller-Auer S."/>
            <person name="Gabel C."/>
            <person name="Fuchs M."/>
            <person name="Benes V."/>
            <person name="Wurmbach E."/>
            <person name="Drzonek H."/>
            <person name="Erfle H."/>
            <person name="Jordan N."/>
            <person name="Bangert S."/>
            <person name="Wiedelmann R."/>
            <person name="Kranz H."/>
            <person name="Voss H."/>
            <person name="Holland R."/>
            <person name="Brandt P."/>
            <person name="Nyakatura G."/>
            <person name="Vezzi A."/>
            <person name="D'Angelo M."/>
            <person name="Pallavicini A."/>
            <person name="Toppo S."/>
            <person name="Simionati B."/>
            <person name="Conrad A."/>
            <person name="Hornischer K."/>
            <person name="Kauer G."/>
            <person name="Loehnert T.-H."/>
            <person name="Nordsiek G."/>
            <person name="Reichelt J."/>
            <person name="Scharfe M."/>
            <person name="Schoen O."/>
            <person name="Bargues M."/>
            <person name="Terol J."/>
            <person name="Climent J."/>
            <person name="Navarro P."/>
            <person name="Collado C."/>
            <person name="Perez-Perez A."/>
            <person name="Ottenwaelder B."/>
            <person name="Duchemin D."/>
            <person name="Cooke R."/>
            <person name="Laudie M."/>
            <person name="Berger-Llauro C."/>
            <person name="Purnelle B."/>
            <person name="Masuy D."/>
            <person name="de Haan M."/>
            <person name="Maarse A.C."/>
            <person name="Alcaraz J.-P."/>
            <person name="Cottet A."/>
            <person name="Casacuberta E."/>
            <person name="Monfort A."/>
            <person name="Argiriou A."/>
            <person name="Flores M."/>
            <person name="Liguori R."/>
            <person name="Vitale D."/>
            <person name="Mannhaupt G."/>
            <person name="Haase D."/>
            <person name="Schoof H."/>
            <person name="Rudd S."/>
            <person name="Zaccaria P."/>
            <person name="Mewes H.-W."/>
            <person name="Mayer K.F.X."/>
            <person name="Kaul S."/>
            <person name="Town C.D."/>
            <person name="Koo H.L."/>
            <person name="Tallon L.J."/>
            <person name="Jenkins J."/>
            <person name="Rooney T."/>
            <person name="Rizzo M."/>
            <person name="Walts A."/>
            <person name="Utterback T."/>
            <person name="Fujii C.Y."/>
            <person name="Shea T.P."/>
            <person name="Creasy T.H."/>
            <person name="Haas B."/>
            <person name="Maiti R."/>
            <person name="Wu D."/>
            <person name="Peterson J."/>
            <person name="Van Aken S."/>
            <person name="Pai G."/>
            <person name="Militscher J."/>
            <person name="Sellers P."/>
            <person name="Gill J.E."/>
            <person name="Feldblyum T.V."/>
            <person name="Preuss D."/>
            <person name="Lin X."/>
            <person name="Nierman W.C."/>
            <person name="Salzberg S.L."/>
            <person name="White O."/>
            <person name="Venter J.C."/>
            <person name="Fraser C.M."/>
            <person name="Kaneko T."/>
            <person name="Nakamura Y."/>
            <person name="Sato S."/>
            <person name="Kato T."/>
            <person name="Asamizu E."/>
            <person name="Sasamoto S."/>
            <person name="Kimura T."/>
            <person name="Idesawa K."/>
            <person name="Kawashima K."/>
            <person name="Kishida Y."/>
            <person name="Kiyokawa C."/>
            <person name="Kohara M."/>
            <person name="Matsumoto M."/>
            <person name="Matsuno A."/>
            <person name="Muraki A."/>
            <person name="Nakayama S."/>
            <person name="Nakazaki N."/>
            <person name="Shinpo S."/>
            <person name="Takeuchi C."/>
            <person name="Wada T."/>
            <person name="Watanabe A."/>
            <person name="Yamada M."/>
            <person name="Yasuda M."/>
            <person name="Tabata S."/>
        </authorList>
    </citation>
    <scope>NUCLEOTIDE SEQUENCE [LARGE SCALE GENOMIC DNA]</scope>
    <source>
        <strain>cv. Columbia</strain>
    </source>
</reference>
<reference key="2">
    <citation type="journal article" date="2017" name="Plant J.">
        <title>Araport11: a complete reannotation of the Arabidopsis thaliana reference genome.</title>
        <authorList>
            <person name="Cheng C.Y."/>
            <person name="Krishnakumar V."/>
            <person name="Chan A.P."/>
            <person name="Thibaud-Nissen F."/>
            <person name="Schobel S."/>
            <person name="Town C.D."/>
        </authorList>
    </citation>
    <scope>GENOME REANNOTATION</scope>
    <source>
        <strain>cv. Columbia</strain>
    </source>
</reference>
<reference key="3">
    <citation type="journal article" date="2001" name="Plant Cell">
        <title>A cell plate-specific callose synthase and its interaction with phragmoplastin.</title>
        <authorList>
            <person name="Hong Z."/>
            <person name="Delauney A.J."/>
            <person name="Verma D.P.S."/>
        </authorList>
    </citation>
    <scope>GENE FAMILY</scope>
    <scope>NOMENCLATURE</scope>
</reference>
<reference key="4">
    <citation type="journal article" date="2003" name="Plant Cell">
        <title>An Arabidopsis callose synthase, GSL5, is required for wound and papillary callose formation.</title>
        <authorList>
            <person name="Jacobs A.K."/>
            <person name="Lipka V."/>
            <person name="Burton R.A."/>
            <person name="Panstruga R."/>
            <person name="Strizhov N."/>
            <person name="Schulze-Lefert P."/>
            <person name="Fincher G.B."/>
        </authorList>
    </citation>
    <scope>FUNCTION</scope>
</reference>
<reference key="5">
    <citation type="journal article" date="2005" name="Plant Mol. Biol.">
        <title>Two callose synthases, GSL1 and GSL5, play an essential and redundant role in plant and pollen development and in fertility.</title>
        <authorList>
            <person name="Enns L.C."/>
            <person name="Kanaoka M.M."/>
            <person name="Torii K.U."/>
            <person name="Comai L."/>
            <person name="Okada K."/>
            <person name="Cleland R.E."/>
        </authorList>
    </citation>
    <scope>NOMENCLATURE</scope>
</reference>
<sequence length="1921" mass="223514">MEASSSGTAELPRSLSRRAPSRATTMMIDRPNEDASAMDSELVPSSLASIAPILRVANEIEKDNPRVAYLCRFHAFEKAHRMDATSSGRGVRQFKTYLLHRLEKEEEETKPQLAKNDPREIQAYYQNFYEKYIKEGETSRKPEEMARLYQIASVLYDVLKTVVPSPKVDYETRRYAEEVERKRDRYEHYNILPLYAVGTKPAIVELPEVKAAFSAVRNVRNLPRRRIHLPSNTPNEMRKARTKLNDILEWLASEFGFQRGNVANQREHIILLLANADIRKRNDEEYDELKPSTVTELMDKTFKSYYSWCKYLHSTSNLKFPDDCDKQQLQLIYISLYLLIWGEASNVRFMPECICYIFHNMANDVYGILFSNVEAVSGETYETEEVIDEESFLRTVITPIYQVIRNEAKRNKGGTASHSQWRNYDDLNEYFWSKKCFKIGWPLDLKADFFLNSDEITPQDERLNQVTYGKSKPKTNFVEVRTFWNLFRDFDRMWIFLVMAFQAMVIVGWHGSGSLGDIFDKDVFKTVLTIFITSAYLTLLQAALDIILNFNAWKNFKFSQILRYLLKFAVAFMWAVLLPIAYSKSVQRPTGVVKFFSTWTGDWKDQSFYTYAVSFYVLPNILAALLFLVPPFRRAMECSDMRPIKVIMWWAQPKLYVGRGMHEDMFSLFKYTTFWIMLLISKLAFNYYVEILPLITPTKMIMNLHIGHYQWHEFFPHATNNIGVVIAIWAPIVLVYLMDTQIWYAIFSTLFGGIHGAFSHLGEIRTLGMLRSRFESIPIAFSRTLMPSEDAKRKHADDYVDQKNITNFSQVWNEFIYSMRSEDKISDRDRDLLLVPSSSGDVSVIQWPPFLLASKIPIAVDMAKDFKGKEDAELFRKIKSDSYMYYAVIESYETLKKIIYALLEDEADRRVMNQVFLEVDMSMQQQRFIYEFRMSGLPLLSDKLEKFLSILLSDYEDQGTYKSQLINVFQDVIEIITQDLLVNGHEILERARVHSPDIKNEKKEQRFEKINIHLVRDRCWREKVIRLHLLLSVKESAINVPQNLEARRRITFFANSLFMNMPSAPRIRDMLSFSVLTPYYKEDVLYSEEDLNKENEDGISILFYLQKIYPDEWTNYLDRLKDPKLPEKDKSEFLREWVSYRGQTLARTVRGMMYYRQALELQCYQEVAGEQAEFSVFRAMASNDENQKAFLERARALADLKFTYVVSCQVYGNQKKSGDIHNRSCYTNILQLMLKYPSLRVAYVDEREETADAKSPKVFYSVLLKGGDKFDEEIYRIKLPGPPAEIGEGKPENQNHAIIFTRGEALQTIDMNQDNYFEEAFKLRNVLEEFNKERVGRRKPTILGLREHIFTGSVSSLAWFMSNQESSFVTIGQRILANPLRVRFHYGHPDIFDRIFHITRGGVSKASKVINLSEDIFGGFNSTLRGGYVTHHEYIQVGKGRDVGLNPISIFEAKVANGNGEQTLSRDVYRLGHRFDFYRMLSFYFTTIGFYFSSMLTVLTVYAFLYGRMYMVMSGLEKEILRLASPNQLEALEQALATQSIFQLGFLMVLPMVMEIGLEHGFRSAIVDFFIMQLQLASVFFTFQLGTKSHYYGRTILHGGSKYRPTGRGFVVFHAKFAENYRLYSRSHFVKGLELLLLLVVYQIYGHSYRSSNLYLYITVSMWFMVGSWLFAPFIFNPSGFEWQKTVDDWTDWKRWLGDRGGIGIPVEKSWESWWNVEQEHLKHTSIRGRILEITLALRFFIYQYGIVYQLNISQRSKSFLVYGLSWVVLLTSLLVLKMVSMGRRRFGTDFQLMFRILKALLFLGFLSVMTILFVVFKLTLTDLSASVLAFLPTGWAILLIGQVLRSPIKALGVWDSVKELGRAYENIMGLVIFAPIAVLSWFPIVSEFQARLLFNQAFSRGLQISMILAGRKDKATSSHK</sequence>
<organism>
    <name type="scientific">Arabidopsis thaliana</name>
    <name type="common">Mouse-ear cress</name>
    <dbReference type="NCBI Taxonomy" id="3702"/>
    <lineage>
        <taxon>Eukaryota</taxon>
        <taxon>Viridiplantae</taxon>
        <taxon>Streptophyta</taxon>
        <taxon>Embryophyta</taxon>
        <taxon>Tracheophyta</taxon>
        <taxon>Spermatophyta</taxon>
        <taxon>Magnoliopsida</taxon>
        <taxon>eudicotyledons</taxon>
        <taxon>Gunneridae</taxon>
        <taxon>Pentapetalae</taxon>
        <taxon>rosids</taxon>
        <taxon>malvids</taxon>
        <taxon>Brassicales</taxon>
        <taxon>Brassicaceae</taxon>
        <taxon>Camelineae</taxon>
        <taxon>Arabidopsis</taxon>
    </lineage>
</organism>
<accession>Q9LYS6</accession>
<proteinExistence type="inferred from homology"/>
<feature type="chain" id="PRO_0000334578" description="Putative callose synthase 6">
    <location>
        <begin position="1"/>
        <end position="1921"/>
    </location>
</feature>
<feature type="topological domain" description="Cytoplasmic" evidence="1">
    <location>
        <begin position="1"/>
        <end position="492"/>
    </location>
</feature>
<feature type="transmembrane region" description="Helical" evidence="1">
    <location>
        <begin position="493"/>
        <end position="513"/>
    </location>
</feature>
<feature type="topological domain" description="Extracellular" evidence="1">
    <location>
        <begin position="514"/>
        <end position="526"/>
    </location>
</feature>
<feature type="transmembrane region" description="Helical" evidence="1">
    <location>
        <begin position="527"/>
        <end position="547"/>
    </location>
</feature>
<feature type="topological domain" description="Cytoplasmic" evidence="1">
    <location>
        <begin position="548"/>
        <end position="560"/>
    </location>
</feature>
<feature type="transmembrane region" description="Helical" evidence="1">
    <location>
        <begin position="561"/>
        <end position="581"/>
    </location>
</feature>
<feature type="topological domain" description="Extracellular" evidence="1">
    <location>
        <begin position="582"/>
        <end position="611"/>
    </location>
</feature>
<feature type="transmembrane region" description="Helical" evidence="1">
    <location>
        <begin position="612"/>
        <end position="632"/>
    </location>
</feature>
<feature type="topological domain" description="Cytoplasmic" evidence="1">
    <location>
        <begin position="633"/>
        <end position="674"/>
    </location>
</feature>
<feature type="transmembrane region" description="Helical" evidence="1">
    <location>
        <begin position="675"/>
        <end position="695"/>
    </location>
</feature>
<feature type="topological domain" description="Extracellular" evidence="1">
    <location>
        <begin position="696"/>
        <end position="721"/>
    </location>
</feature>
<feature type="transmembrane region" description="Helical" evidence="1">
    <location>
        <begin position="722"/>
        <end position="742"/>
    </location>
</feature>
<feature type="topological domain" description="Cytoplasmic" evidence="1">
    <location>
        <begin position="743"/>
        <end position="1484"/>
    </location>
</feature>
<feature type="transmembrane region" description="Helical" evidence="1">
    <location>
        <begin position="1485"/>
        <end position="1505"/>
    </location>
</feature>
<feature type="topological domain" description="Extracellular" evidence="1">
    <location>
        <begin position="1506"/>
        <end position="1540"/>
    </location>
</feature>
<feature type="transmembrane region" description="Helical" evidence="1">
    <location>
        <begin position="1541"/>
        <end position="1561"/>
    </location>
</feature>
<feature type="topological domain" description="Cytoplasmic" evidence="1">
    <location>
        <begin position="1562"/>
        <end position="1564"/>
    </location>
</feature>
<feature type="transmembrane region" description="Helical" evidence="1">
    <location>
        <begin position="1565"/>
        <end position="1585"/>
    </location>
</feature>
<feature type="topological domain" description="Extracellular" evidence="1">
    <location>
        <begin position="1586"/>
        <end position="1628"/>
    </location>
</feature>
<feature type="transmembrane region" description="Helical" evidence="1">
    <location>
        <begin position="1629"/>
        <end position="1649"/>
    </location>
</feature>
<feature type="topological domain" description="Cytoplasmic" evidence="1">
    <location>
        <begin position="1650"/>
        <end position="1655"/>
    </location>
</feature>
<feature type="transmembrane region" description="Helical" evidence="1">
    <location>
        <begin position="1656"/>
        <end position="1676"/>
    </location>
</feature>
<feature type="topological domain" description="Extracellular" evidence="1">
    <location>
        <begin position="1677"/>
        <end position="1730"/>
    </location>
</feature>
<feature type="transmembrane region" description="Helical" evidence="1">
    <location>
        <begin position="1731"/>
        <end position="1751"/>
    </location>
</feature>
<feature type="topological domain" description="Cytoplasmic" evidence="1">
    <location>
        <begin position="1752"/>
        <end position="1759"/>
    </location>
</feature>
<feature type="transmembrane region" description="Helical" evidence="1">
    <location>
        <begin position="1760"/>
        <end position="1780"/>
    </location>
</feature>
<feature type="topological domain" description="Extracellular" evidence="1">
    <location>
        <begin position="1781"/>
        <end position="1796"/>
    </location>
</feature>
<feature type="transmembrane region" description="Helical" evidence="1">
    <location>
        <begin position="1797"/>
        <end position="1817"/>
    </location>
</feature>
<feature type="topological domain" description="Cytoplasmic" evidence="1">
    <location>
        <begin position="1818"/>
        <end position="1823"/>
    </location>
</feature>
<feature type="transmembrane region" description="Helical" evidence="1">
    <location>
        <begin position="1824"/>
        <end position="1844"/>
    </location>
</feature>
<feature type="topological domain" description="Extracellular" evidence="1">
    <location>
        <begin position="1845"/>
        <end position="1867"/>
    </location>
</feature>
<feature type="transmembrane region" description="Helical" evidence="1">
    <location>
        <begin position="1868"/>
        <end position="1888"/>
    </location>
</feature>
<feature type="topological domain" description="Cytoplasmic" evidence="1">
    <location>
        <begin position="1889"/>
        <end position="1921"/>
    </location>
</feature>
<feature type="region of interest" description="Disordered" evidence="2">
    <location>
        <begin position="1"/>
        <end position="23"/>
    </location>
</feature>
<dbReference type="EC" id="2.4.1.34"/>
<dbReference type="EMBL" id="AL163527">
    <property type="protein sequence ID" value="CAB86938.1"/>
    <property type="status" value="ALT_SEQ"/>
    <property type="molecule type" value="Genomic_DNA"/>
</dbReference>
<dbReference type="EMBL" id="CP002686">
    <property type="protein sequence ID" value="AEE79878.1"/>
    <property type="molecule type" value="Genomic_DNA"/>
</dbReference>
<dbReference type="PIR" id="T47792">
    <property type="entry name" value="T47792"/>
</dbReference>
<dbReference type="RefSeq" id="NP_191469.3">
    <property type="nucleotide sequence ID" value="NM_115772.4"/>
</dbReference>
<dbReference type="SMR" id="Q9LYS6"/>
<dbReference type="FunCoup" id="Q9LYS6">
    <property type="interactions" value="462"/>
</dbReference>
<dbReference type="STRING" id="3702.Q9LYS6"/>
<dbReference type="CAZy" id="GT48">
    <property type="family name" value="Glycosyltransferase Family 48"/>
</dbReference>
<dbReference type="iPTMnet" id="Q9LYS6"/>
<dbReference type="PaxDb" id="3702-AT3G59100.1"/>
<dbReference type="ProteomicsDB" id="240588"/>
<dbReference type="EnsemblPlants" id="AT3G59100.1">
    <property type="protein sequence ID" value="AT3G59100.1"/>
    <property type="gene ID" value="AT3G59100"/>
</dbReference>
<dbReference type="GeneID" id="825079"/>
<dbReference type="Gramene" id="AT3G59100.1">
    <property type="protein sequence ID" value="AT3G59100.1"/>
    <property type="gene ID" value="AT3G59100"/>
</dbReference>
<dbReference type="KEGG" id="ath:AT3G59100"/>
<dbReference type="Araport" id="AT3G59100"/>
<dbReference type="TAIR" id="AT3G59100">
    <property type="gene designation" value="GSL11"/>
</dbReference>
<dbReference type="eggNOG" id="KOG0916">
    <property type="taxonomic scope" value="Eukaryota"/>
</dbReference>
<dbReference type="HOGENOM" id="CLU_000742_0_0_1"/>
<dbReference type="InParanoid" id="Q9LYS6"/>
<dbReference type="OrthoDB" id="1043080at2759"/>
<dbReference type="PhylomeDB" id="Q9LYS6"/>
<dbReference type="BioCyc" id="ARA:AT3G59100-MONOMER"/>
<dbReference type="PRO" id="PR:Q9LYS6"/>
<dbReference type="Proteomes" id="UP000006548">
    <property type="component" value="Chromosome 3"/>
</dbReference>
<dbReference type="ExpressionAtlas" id="Q9LYS6">
    <property type="expression patterns" value="baseline and differential"/>
</dbReference>
<dbReference type="GO" id="GO:0000148">
    <property type="term" value="C:1,3-beta-D-glucan synthase complex"/>
    <property type="evidence" value="ECO:0007669"/>
    <property type="project" value="InterPro"/>
</dbReference>
<dbReference type="GO" id="GO:0005886">
    <property type="term" value="C:plasma membrane"/>
    <property type="evidence" value="ECO:0007669"/>
    <property type="project" value="UniProtKB-SubCell"/>
</dbReference>
<dbReference type="GO" id="GO:0003843">
    <property type="term" value="F:1,3-beta-D-glucan synthase activity"/>
    <property type="evidence" value="ECO:0007669"/>
    <property type="project" value="UniProtKB-EC"/>
</dbReference>
<dbReference type="GO" id="GO:0006075">
    <property type="term" value="P:(1-&gt;3)-beta-D-glucan biosynthetic process"/>
    <property type="evidence" value="ECO:0007669"/>
    <property type="project" value="InterPro"/>
</dbReference>
<dbReference type="GO" id="GO:0071555">
    <property type="term" value="P:cell wall organization"/>
    <property type="evidence" value="ECO:0007669"/>
    <property type="project" value="UniProtKB-KW"/>
</dbReference>
<dbReference type="GO" id="GO:0008360">
    <property type="term" value="P:regulation of cell shape"/>
    <property type="evidence" value="ECO:0007669"/>
    <property type="project" value="UniProtKB-KW"/>
</dbReference>
<dbReference type="Gene3D" id="1.25.40.270">
    <property type="entry name" value="Vacuolar protein sorting-associated protein vta1"/>
    <property type="match status" value="1"/>
</dbReference>
<dbReference type="InterPro" id="IPR026899">
    <property type="entry name" value="FKS1-like_dom1"/>
</dbReference>
<dbReference type="InterPro" id="IPR003440">
    <property type="entry name" value="Glyco_trans_48_dom"/>
</dbReference>
<dbReference type="InterPro" id="IPR039431">
    <property type="entry name" value="Vta1/CALS_N"/>
</dbReference>
<dbReference type="InterPro" id="IPR023175">
    <property type="entry name" value="Vta1/CALS_N_sf"/>
</dbReference>
<dbReference type="PANTHER" id="PTHR12741:SF55">
    <property type="entry name" value="CALLOSE SYNTHASE 6-RELATED"/>
    <property type="match status" value="1"/>
</dbReference>
<dbReference type="PANTHER" id="PTHR12741">
    <property type="entry name" value="LYST-INTERACTING PROTEIN LIP5 DOPAMINE RESPONSIVE PROTEIN DRG-1"/>
    <property type="match status" value="1"/>
</dbReference>
<dbReference type="Pfam" id="PF14288">
    <property type="entry name" value="FKS1_dom1"/>
    <property type="match status" value="1"/>
</dbReference>
<dbReference type="Pfam" id="PF02364">
    <property type="entry name" value="Glucan_synthase"/>
    <property type="match status" value="2"/>
</dbReference>
<dbReference type="Pfam" id="PF04652">
    <property type="entry name" value="Vta1"/>
    <property type="match status" value="1"/>
</dbReference>
<dbReference type="SMART" id="SM01205">
    <property type="entry name" value="FKS1_dom1"/>
    <property type="match status" value="1"/>
</dbReference>